<sequence length="338" mass="36246">MKFVDSASVFVQAGDGGRGCVSFRREKFVPKGGPDGGDGGRGGHVWLETNSHLTTLLDFKYKNKYIAERGVHGQGARKTGKDGVEVVIQVPCGTIVRNAATGEVIADLTEDAQKILIARGGRGGRGNQHFATSTHQAPRHAEPGQKGEEFTLDLELKLMADVGLVGFPNAGKSTLISVVSAARPKIADYPFTTLVPNLGIVRYDDYKSFVMADIPGIIEGAAEGRGLGLQFLRHIERTKVLAILIAVDSPDIEAEYQTILGELEKFSATLLQKPRIVVITKMDVTDEPLALQLAGEQTPIFAISAVAGQGLKELKDALWRIIVAERAVPTNQVPQGGE</sequence>
<organism>
    <name type="scientific">Chlorobium chlorochromatii (strain CaD3)</name>
    <dbReference type="NCBI Taxonomy" id="340177"/>
    <lineage>
        <taxon>Bacteria</taxon>
        <taxon>Pseudomonadati</taxon>
        <taxon>Chlorobiota</taxon>
        <taxon>Chlorobiia</taxon>
        <taxon>Chlorobiales</taxon>
        <taxon>Chlorobiaceae</taxon>
        <taxon>Chlorobium/Pelodictyon group</taxon>
        <taxon>Chlorobium</taxon>
    </lineage>
</organism>
<keyword id="KW-0963">Cytoplasm</keyword>
<keyword id="KW-0342">GTP-binding</keyword>
<keyword id="KW-0378">Hydrolase</keyword>
<keyword id="KW-0460">Magnesium</keyword>
<keyword id="KW-0479">Metal-binding</keyword>
<keyword id="KW-0547">Nucleotide-binding</keyword>
<comment type="function">
    <text evidence="1">An essential GTPase which binds GTP, GDP and possibly (p)ppGpp with moderate affinity, with high nucleotide exchange rates and a fairly low GTP hydrolysis rate. Plays a role in control of the cell cycle, stress response, ribosome biogenesis and in those bacteria that undergo differentiation, in morphogenesis control.</text>
</comment>
<comment type="cofactor">
    <cofactor evidence="1">
        <name>Mg(2+)</name>
        <dbReference type="ChEBI" id="CHEBI:18420"/>
    </cofactor>
</comment>
<comment type="subunit">
    <text evidence="1">Monomer.</text>
</comment>
<comment type="subcellular location">
    <subcellularLocation>
        <location evidence="1">Cytoplasm</location>
    </subcellularLocation>
</comment>
<comment type="similarity">
    <text evidence="1">Belongs to the TRAFAC class OBG-HflX-like GTPase superfamily. OBG GTPase family.</text>
</comment>
<protein>
    <recommendedName>
        <fullName evidence="1">GTPase Obg</fullName>
        <ecNumber evidence="1">3.6.5.-</ecNumber>
    </recommendedName>
    <alternativeName>
        <fullName evidence="1">GTP-binding protein Obg</fullName>
    </alternativeName>
</protein>
<dbReference type="EC" id="3.6.5.-" evidence="1"/>
<dbReference type="EMBL" id="CP000108">
    <property type="protein sequence ID" value="ABB29121.1"/>
    <property type="molecule type" value="Genomic_DNA"/>
</dbReference>
<dbReference type="SMR" id="Q3APF4"/>
<dbReference type="STRING" id="340177.Cag_1871"/>
<dbReference type="KEGG" id="cch:Cag_1871"/>
<dbReference type="eggNOG" id="COG0536">
    <property type="taxonomic scope" value="Bacteria"/>
</dbReference>
<dbReference type="HOGENOM" id="CLU_011747_2_0_10"/>
<dbReference type="OrthoDB" id="9807318at2"/>
<dbReference type="GO" id="GO:0005737">
    <property type="term" value="C:cytoplasm"/>
    <property type="evidence" value="ECO:0007669"/>
    <property type="project" value="UniProtKB-SubCell"/>
</dbReference>
<dbReference type="GO" id="GO:0005525">
    <property type="term" value="F:GTP binding"/>
    <property type="evidence" value="ECO:0007669"/>
    <property type="project" value="UniProtKB-UniRule"/>
</dbReference>
<dbReference type="GO" id="GO:0003924">
    <property type="term" value="F:GTPase activity"/>
    <property type="evidence" value="ECO:0007669"/>
    <property type="project" value="UniProtKB-UniRule"/>
</dbReference>
<dbReference type="GO" id="GO:0000287">
    <property type="term" value="F:magnesium ion binding"/>
    <property type="evidence" value="ECO:0007669"/>
    <property type="project" value="InterPro"/>
</dbReference>
<dbReference type="GO" id="GO:0042254">
    <property type="term" value="P:ribosome biogenesis"/>
    <property type="evidence" value="ECO:0007669"/>
    <property type="project" value="UniProtKB-UniRule"/>
</dbReference>
<dbReference type="CDD" id="cd01898">
    <property type="entry name" value="Obg"/>
    <property type="match status" value="1"/>
</dbReference>
<dbReference type="FunFam" id="2.70.210.12:FF:000001">
    <property type="entry name" value="GTPase Obg"/>
    <property type="match status" value="1"/>
</dbReference>
<dbReference type="Gene3D" id="2.70.210.12">
    <property type="entry name" value="GTP1/OBG domain"/>
    <property type="match status" value="1"/>
</dbReference>
<dbReference type="Gene3D" id="3.40.50.300">
    <property type="entry name" value="P-loop containing nucleotide triphosphate hydrolases"/>
    <property type="match status" value="1"/>
</dbReference>
<dbReference type="HAMAP" id="MF_01454">
    <property type="entry name" value="GTPase_Obg"/>
    <property type="match status" value="1"/>
</dbReference>
<dbReference type="InterPro" id="IPR031167">
    <property type="entry name" value="G_OBG"/>
</dbReference>
<dbReference type="InterPro" id="IPR006073">
    <property type="entry name" value="GTP-bd"/>
</dbReference>
<dbReference type="InterPro" id="IPR014100">
    <property type="entry name" value="GTP-bd_Obg/CgtA"/>
</dbReference>
<dbReference type="InterPro" id="IPR006074">
    <property type="entry name" value="GTP1-OBG_CS"/>
</dbReference>
<dbReference type="InterPro" id="IPR006169">
    <property type="entry name" value="GTP1_OBG_dom"/>
</dbReference>
<dbReference type="InterPro" id="IPR036726">
    <property type="entry name" value="GTP1_OBG_dom_sf"/>
</dbReference>
<dbReference type="InterPro" id="IPR045086">
    <property type="entry name" value="OBG_GTPase"/>
</dbReference>
<dbReference type="InterPro" id="IPR027417">
    <property type="entry name" value="P-loop_NTPase"/>
</dbReference>
<dbReference type="NCBIfam" id="TIGR02729">
    <property type="entry name" value="Obg_CgtA"/>
    <property type="match status" value="1"/>
</dbReference>
<dbReference type="NCBIfam" id="NF008954">
    <property type="entry name" value="PRK12296.1"/>
    <property type="match status" value="1"/>
</dbReference>
<dbReference type="NCBIfam" id="NF008955">
    <property type="entry name" value="PRK12297.1"/>
    <property type="match status" value="1"/>
</dbReference>
<dbReference type="NCBIfam" id="NF008956">
    <property type="entry name" value="PRK12299.1"/>
    <property type="match status" value="1"/>
</dbReference>
<dbReference type="PANTHER" id="PTHR11702">
    <property type="entry name" value="DEVELOPMENTALLY REGULATED GTP-BINDING PROTEIN-RELATED"/>
    <property type="match status" value="1"/>
</dbReference>
<dbReference type="PANTHER" id="PTHR11702:SF31">
    <property type="entry name" value="MITOCHONDRIAL RIBOSOME-ASSOCIATED GTPASE 2"/>
    <property type="match status" value="1"/>
</dbReference>
<dbReference type="Pfam" id="PF01018">
    <property type="entry name" value="GTP1_OBG"/>
    <property type="match status" value="1"/>
</dbReference>
<dbReference type="Pfam" id="PF01926">
    <property type="entry name" value="MMR_HSR1"/>
    <property type="match status" value="1"/>
</dbReference>
<dbReference type="PIRSF" id="PIRSF002401">
    <property type="entry name" value="GTP_bd_Obg/CgtA"/>
    <property type="match status" value="1"/>
</dbReference>
<dbReference type="PRINTS" id="PR00326">
    <property type="entry name" value="GTP1OBG"/>
</dbReference>
<dbReference type="SUPFAM" id="SSF82051">
    <property type="entry name" value="Obg GTP-binding protein N-terminal domain"/>
    <property type="match status" value="1"/>
</dbReference>
<dbReference type="SUPFAM" id="SSF52540">
    <property type="entry name" value="P-loop containing nucleoside triphosphate hydrolases"/>
    <property type="match status" value="1"/>
</dbReference>
<dbReference type="PROSITE" id="PS51710">
    <property type="entry name" value="G_OBG"/>
    <property type="match status" value="1"/>
</dbReference>
<dbReference type="PROSITE" id="PS00905">
    <property type="entry name" value="GTP1_OBG"/>
    <property type="match status" value="1"/>
</dbReference>
<dbReference type="PROSITE" id="PS51883">
    <property type="entry name" value="OBG"/>
    <property type="match status" value="1"/>
</dbReference>
<evidence type="ECO:0000255" key="1">
    <source>
        <dbReference type="HAMAP-Rule" id="MF_01454"/>
    </source>
</evidence>
<evidence type="ECO:0000255" key="2">
    <source>
        <dbReference type="PROSITE-ProRule" id="PRU01231"/>
    </source>
</evidence>
<evidence type="ECO:0000256" key="3">
    <source>
        <dbReference type="SAM" id="MobiDB-lite"/>
    </source>
</evidence>
<accession>Q3APF4</accession>
<proteinExistence type="inferred from homology"/>
<gene>
    <name evidence="1" type="primary">obg</name>
    <name type="ordered locus">Cag_1871</name>
</gene>
<feature type="chain" id="PRO_0000385823" description="GTPase Obg">
    <location>
        <begin position="1"/>
        <end position="338"/>
    </location>
</feature>
<feature type="domain" description="Obg" evidence="2">
    <location>
        <begin position="1"/>
        <end position="159"/>
    </location>
</feature>
<feature type="domain" description="OBG-type G" evidence="1">
    <location>
        <begin position="160"/>
        <end position="323"/>
    </location>
</feature>
<feature type="region of interest" description="Disordered" evidence="3">
    <location>
        <begin position="123"/>
        <end position="145"/>
    </location>
</feature>
<feature type="binding site" evidence="1">
    <location>
        <begin position="166"/>
        <end position="173"/>
    </location>
    <ligand>
        <name>GTP</name>
        <dbReference type="ChEBI" id="CHEBI:37565"/>
    </ligand>
</feature>
<feature type="binding site" evidence="1">
    <location>
        <position position="173"/>
    </location>
    <ligand>
        <name>Mg(2+)</name>
        <dbReference type="ChEBI" id="CHEBI:18420"/>
    </ligand>
</feature>
<feature type="binding site" evidence="1">
    <location>
        <begin position="191"/>
        <end position="195"/>
    </location>
    <ligand>
        <name>GTP</name>
        <dbReference type="ChEBI" id="CHEBI:37565"/>
    </ligand>
</feature>
<feature type="binding site" evidence="1">
    <location>
        <position position="193"/>
    </location>
    <ligand>
        <name>Mg(2+)</name>
        <dbReference type="ChEBI" id="CHEBI:18420"/>
    </ligand>
</feature>
<feature type="binding site" evidence="1">
    <location>
        <begin position="213"/>
        <end position="216"/>
    </location>
    <ligand>
        <name>GTP</name>
        <dbReference type="ChEBI" id="CHEBI:37565"/>
    </ligand>
</feature>
<feature type="binding site" evidence="1">
    <location>
        <begin position="280"/>
        <end position="283"/>
    </location>
    <ligand>
        <name>GTP</name>
        <dbReference type="ChEBI" id="CHEBI:37565"/>
    </ligand>
</feature>
<feature type="binding site" evidence="1">
    <location>
        <begin position="304"/>
        <end position="306"/>
    </location>
    <ligand>
        <name>GTP</name>
        <dbReference type="ChEBI" id="CHEBI:37565"/>
    </ligand>
</feature>
<reference key="1">
    <citation type="submission" date="2005-08" db="EMBL/GenBank/DDBJ databases">
        <title>Complete sequence of Chlorobium chlorochromatii CaD3.</title>
        <authorList>
            <consortium name="US DOE Joint Genome Institute"/>
            <person name="Copeland A."/>
            <person name="Lucas S."/>
            <person name="Lapidus A."/>
            <person name="Barry K."/>
            <person name="Detter J.C."/>
            <person name="Glavina T."/>
            <person name="Hammon N."/>
            <person name="Israni S."/>
            <person name="Pitluck S."/>
            <person name="Bryant D."/>
            <person name="Schmutz J."/>
            <person name="Larimer F."/>
            <person name="Land M."/>
            <person name="Kyrpides N."/>
            <person name="Ivanova N."/>
            <person name="Richardson P."/>
        </authorList>
    </citation>
    <scope>NUCLEOTIDE SEQUENCE [LARGE SCALE GENOMIC DNA]</scope>
    <source>
        <strain>CaD3</strain>
    </source>
</reference>
<name>OBG_CHLCH</name>